<evidence type="ECO:0000250" key="1">
    <source>
        <dbReference type="UniProtKB" id="A0A067SLB9"/>
    </source>
</evidence>
<evidence type="ECO:0000303" key="2">
    <source>
    </source>
</evidence>
<evidence type="ECO:0000305" key="3"/>
<evidence type="ECO:0000305" key="4">
    <source>
    </source>
</evidence>
<protein>
    <recommendedName>
        <fullName evidence="2">MSDIN-like toxin proprotein 4</fullName>
    </recommendedName>
    <component>
        <recommendedName>
            <fullName evidence="4">Toxin MSD4</fullName>
        </recommendedName>
    </component>
</protein>
<keyword id="KW-0800">Toxin</keyword>
<reference key="1">
    <citation type="journal article" date="2014" name="Toxicon">
        <title>The molecular diversity of toxin gene families in lethal Amanita mushrooms.</title>
        <authorList>
            <person name="Li P."/>
            <person name="Deng W."/>
            <person name="Li T."/>
        </authorList>
    </citation>
    <scope>NUCLEOTIDE SEQUENCE [GENOMIC DNA]</scope>
    <scope>FUNCTION</scope>
</reference>
<name>MSD4_AMAPH</name>
<dbReference type="EMBL" id="KF552085">
    <property type="protein sequence ID" value="AHB18713.1"/>
    <property type="molecule type" value="Genomic_DNA"/>
</dbReference>
<dbReference type="GO" id="GO:0090729">
    <property type="term" value="F:toxin activity"/>
    <property type="evidence" value="ECO:0007669"/>
    <property type="project" value="UniProtKB-KW"/>
</dbReference>
<dbReference type="InterPro" id="IPR027582">
    <property type="entry name" value="Amanitin/phalloidin"/>
</dbReference>
<dbReference type="NCBIfam" id="TIGR04309">
    <property type="entry name" value="amanitin"/>
    <property type="match status" value="1"/>
</dbReference>
<feature type="propeptide" id="PRO_0000443680" evidence="4">
    <location>
        <begin position="1"/>
        <end position="10"/>
    </location>
</feature>
<feature type="peptide" id="PRO_0000443681" description="Toxin MSD4" evidence="4">
    <location>
        <begin position="11"/>
        <end position="16"/>
    </location>
</feature>
<feature type="propeptide" id="PRO_0000443682" evidence="4">
    <location>
        <begin position="17"/>
        <end position="31"/>
    </location>
</feature>
<feature type="cross-link" description="Cyclopeptide (Trp-Pro)" evidence="4">
    <location>
        <begin position="11"/>
        <end position="16"/>
    </location>
</feature>
<comment type="function">
    <text evidence="4">Probable toxin that belongs to the MSDIN-like toxin family responsible for a large number of food poisoning cases and deaths (PubMed:24613547).</text>
</comment>
<comment type="PTM">
    <text evidence="1">Processed by the macrocyclase-peptidase enzyme POPB to yield a toxic cyclic hexapeptide (By similarity). POPB first removes 10 residues from the N-terminus (By similarity). Conformational trapping of the remaining peptide forces the enzyme to release this intermediate rather than proceed to macrocyclization (By similarity). The enzyme rebinds the remaining peptide in a different conformation and catalyzes macrocyclization of the N-terminal 6 residues (By similarity).</text>
</comment>
<comment type="similarity">
    <text evidence="3">Belongs to the MSDIN fungal toxin family.</text>
</comment>
<sequence length="31" mass="3389">MSDINGTRLPWLATCPCVGEDVNPTLSRGER</sequence>
<accession>A0A023IWE1</accession>
<proteinExistence type="inferred from homology"/>
<organism>
    <name type="scientific">Amanita phalloides</name>
    <name type="common">Death cap</name>
    <dbReference type="NCBI Taxonomy" id="67723"/>
    <lineage>
        <taxon>Eukaryota</taxon>
        <taxon>Fungi</taxon>
        <taxon>Dikarya</taxon>
        <taxon>Basidiomycota</taxon>
        <taxon>Agaricomycotina</taxon>
        <taxon>Agaricomycetes</taxon>
        <taxon>Agaricomycetidae</taxon>
        <taxon>Agaricales</taxon>
        <taxon>Pluteineae</taxon>
        <taxon>Amanitaceae</taxon>
        <taxon>Amanita</taxon>
    </lineage>
</organism>